<accession>Q721K2</accession>
<sequence>MINQNLYYQSVANSKPIEIYLFFDPACDDCWNIEANMLRLQMEYGNYFKLRYVLHNNLQTFVCKQKRAGNSNLSLKEQQIGAHLSYISCLAVKAAELQGKKQGITFLRKIQAAYFLENKDIASEEVLYDIAVSTGLDLSEFKKDLASTVAKRAYIGDQKVAQEMEIHENPTVVFFNKNIEDAGLKLSGLHRYEVYVHVLSELLNDAPQPEERPQMEEYLAKVKVTSSATMADFYGVSEQQIERQMKKWRLQQKVELIDAPDGQAHWKYIGNL</sequence>
<reference key="1">
    <citation type="journal article" date="2004" name="Nucleic Acids Res.">
        <title>Whole genome comparisons of serotype 4b and 1/2a strains of the food-borne pathogen Listeria monocytogenes reveal new insights into the core genome components of this species.</title>
        <authorList>
            <person name="Nelson K.E."/>
            <person name="Fouts D.E."/>
            <person name="Mongodin E.F."/>
            <person name="Ravel J."/>
            <person name="DeBoy R.T."/>
            <person name="Kolonay J.F."/>
            <person name="Rasko D.A."/>
            <person name="Angiuoli S.V."/>
            <person name="Gill S.R."/>
            <person name="Paulsen I.T."/>
            <person name="Peterson J.D."/>
            <person name="White O."/>
            <person name="Nelson W.C."/>
            <person name="Nierman W.C."/>
            <person name="Beanan M.J."/>
            <person name="Brinkac L.M."/>
            <person name="Daugherty S.C."/>
            <person name="Dodson R.J."/>
            <person name="Durkin A.S."/>
            <person name="Madupu R."/>
            <person name="Haft D.H."/>
            <person name="Selengut J."/>
            <person name="Van Aken S.E."/>
            <person name="Khouri H.M."/>
            <person name="Fedorova N."/>
            <person name="Forberger H.A."/>
            <person name="Tran B."/>
            <person name="Kathariou S."/>
            <person name="Wonderling L.D."/>
            <person name="Uhlich G.A."/>
            <person name="Bayles D.O."/>
            <person name="Luchansky J.B."/>
            <person name="Fraser C.M."/>
        </authorList>
    </citation>
    <scope>NUCLEOTIDE SEQUENCE [LARGE SCALE GENOMIC DNA]</scope>
    <source>
        <strain>F2365</strain>
    </source>
</reference>
<proteinExistence type="inferred from homology"/>
<keyword id="KW-0963">Cytoplasm</keyword>
<evidence type="ECO:0000255" key="1">
    <source>
        <dbReference type="HAMAP-Rule" id="MF_02245"/>
    </source>
</evidence>
<organism>
    <name type="scientific">Listeria monocytogenes serotype 4b (strain F2365)</name>
    <dbReference type="NCBI Taxonomy" id="265669"/>
    <lineage>
        <taxon>Bacteria</taxon>
        <taxon>Bacillati</taxon>
        <taxon>Bacillota</taxon>
        <taxon>Bacilli</taxon>
        <taxon>Bacillales</taxon>
        <taxon>Listeriaceae</taxon>
        <taxon>Listeria</taxon>
    </lineage>
</organism>
<feature type="chain" id="PRO_0000278685" description="ClpXP adapter protein SpxH">
    <location>
        <begin position="1"/>
        <end position="272"/>
    </location>
</feature>
<comment type="function">
    <text evidence="1">Adapter protein required for efficient degradation of Spx by ClpXP under non-stress conditions. Interaction with Spx stabilizes Spx and exposes the C-terminus of Spx for recognition and proteolysis by ClpXP.</text>
</comment>
<comment type="subunit">
    <text evidence="1">Interacts with Spx.</text>
</comment>
<comment type="subcellular location">
    <subcellularLocation>
        <location evidence="1">Cytoplasm</location>
    </subcellularLocation>
</comment>
<comment type="similarity">
    <text evidence="1">Belongs to the SpxH family.</text>
</comment>
<gene>
    <name evidence="1" type="primary">spxH</name>
    <name type="ordered locus">LMOf2365_0984</name>
</gene>
<name>SPXH_LISMF</name>
<dbReference type="EMBL" id="AE017262">
    <property type="protein sequence ID" value="AAT03762.1"/>
    <property type="molecule type" value="Genomic_DNA"/>
</dbReference>
<dbReference type="SMR" id="Q721K2"/>
<dbReference type="KEGG" id="lmf:LMOf2365_0984"/>
<dbReference type="HOGENOM" id="CLU_069785_0_0_9"/>
<dbReference type="GO" id="GO:0005737">
    <property type="term" value="C:cytoplasm"/>
    <property type="evidence" value="ECO:0007669"/>
    <property type="project" value="UniProtKB-SubCell"/>
</dbReference>
<dbReference type="CDD" id="cd03025">
    <property type="entry name" value="DsbA_FrnE_like"/>
    <property type="match status" value="1"/>
</dbReference>
<dbReference type="Gene3D" id="3.40.30.10">
    <property type="entry name" value="Glutaredoxin"/>
    <property type="match status" value="1"/>
</dbReference>
<dbReference type="HAMAP" id="MF_02245">
    <property type="entry name" value="Adapter_SpxH"/>
    <property type="match status" value="1"/>
</dbReference>
<dbReference type="InterPro" id="IPR046404">
    <property type="entry name" value="Adapter_SpxH"/>
</dbReference>
<dbReference type="InterPro" id="IPR036249">
    <property type="entry name" value="Thioredoxin-like_sf"/>
</dbReference>
<dbReference type="PANTHER" id="PTHR13887:SF47">
    <property type="entry name" value="CLPXP ADAPTER PROTEIN SPXH"/>
    <property type="match status" value="1"/>
</dbReference>
<dbReference type="PANTHER" id="PTHR13887">
    <property type="entry name" value="GLUTATHIONE S-TRANSFERASE KAPPA"/>
    <property type="match status" value="1"/>
</dbReference>
<dbReference type="Pfam" id="PF13743">
    <property type="entry name" value="Thioredoxin_5"/>
    <property type="match status" value="1"/>
</dbReference>
<dbReference type="SUPFAM" id="SSF52833">
    <property type="entry name" value="Thioredoxin-like"/>
    <property type="match status" value="1"/>
</dbReference>
<protein>
    <recommendedName>
        <fullName evidence="1">ClpXP adapter protein SpxH</fullName>
    </recommendedName>
</protein>